<protein>
    <recommendedName>
        <fullName evidence="1">Large ribosomal subunit protein uL1</fullName>
    </recommendedName>
    <alternativeName>
        <fullName evidence="2">50S ribosomal protein L1</fullName>
    </alternativeName>
</protein>
<organism>
    <name type="scientific">Mycolicibacterium paratuberculosis (strain ATCC BAA-968 / K-10)</name>
    <name type="common">Mycobacterium paratuberculosis</name>
    <dbReference type="NCBI Taxonomy" id="262316"/>
    <lineage>
        <taxon>Bacteria</taxon>
        <taxon>Bacillati</taxon>
        <taxon>Actinomycetota</taxon>
        <taxon>Actinomycetes</taxon>
        <taxon>Mycobacteriales</taxon>
        <taxon>Mycobacteriaceae</taxon>
        <taxon>Mycobacterium</taxon>
        <taxon>Mycobacterium avium complex (MAC)</taxon>
    </lineage>
</organism>
<proteinExistence type="inferred from homology"/>
<evidence type="ECO:0000255" key="1">
    <source>
        <dbReference type="HAMAP-Rule" id="MF_01318"/>
    </source>
</evidence>
<evidence type="ECO:0000305" key="2"/>
<accession>Q73SG1</accession>
<dbReference type="EMBL" id="AE016958">
    <property type="protein sequence ID" value="AAS06663.1"/>
    <property type="molecule type" value="Genomic_DNA"/>
</dbReference>
<dbReference type="RefSeq" id="WP_003873568.1">
    <property type="nucleotide sequence ID" value="NZ_CP106873.1"/>
</dbReference>
<dbReference type="SMR" id="Q73SG1"/>
<dbReference type="STRING" id="262316.MAP_4113"/>
<dbReference type="GeneID" id="75272037"/>
<dbReference type="KEGG" id="mpa:MAP_4113"/>
<dbReference type="eggNOG" id="COG0081">
    <property type="taxonomic scope" value="Bacteria"/>
</dbReference>
<dbReference type="HOGENOM" id="CLU_062853_0_0_11"/>
<dbReference type="Proteomes" id="UP000000580">
    <property type="component" value="Chromosome"/>
</dbReference>
<dbReference type="GO" id="GO:0015934">
    <property type="term" value="C:large ribosomal subunit"/>
    <property type="evidence" value="ECO:0007669"/>
    <property type="project" value="InterPro"/>
</dbReference>
<dbReference type="GO" id="GO:0019843">
    <property type="term" value="F:rRNA binding"/>
    <property type="evidence" value="ECO:0007669"/>
    <property type="project" value="UniProtKB-UniRule"/>
</dbReference>
<dbReference type="GO" id="GO:0003735">
    <property type="term" value="F:structural constituent of ribosome"/>
    <property type="evidence" value="ECO:0007669"/>
    <property type="project" value="InterPro"/>
</dbReference>
<dbReference type="GO" id="GO:0000049">
    <property type="term" value="F:tRNA binding"/>
    <property type="evidence" value="ECO:0007669"/>
    <property type="project" value="UniProtKB-KW"/>
</dbReference>
<dbReference type="GO" id="GO:0006417">
    <property type="term" value="P:regulation of translation"/>
    <property type="evidence" value="ECO:0007669"/>
    <property type="project" value="UniProtKB-KW"/>
</dbReference>
<dbReference type="GO" id="GO:0006412">
    <property type="term" value="P:translation"/>
    <property type="evidence" value="ECO:0007669"/>
    <property type="project" value="UniProtKB-UniRule"/>
</dbReference>
<dbReference type="CDD" id="cd00403">
    <property type="entry name" value="Ribosomal_L1"/>
    <property type="match status" value="1"/>
</dbReference>
<dbReference type="FunFam" id="3.40.50.790:FF:000001">
    <property type="entry name" value="50S ribosomal protein L1"/>
    <property type="match status" value="1"/>
</dbReference>
<dbReference type="Gene3D" id="3.30.190.20">
    <property type="match status" value="1"/>
</dbReference>
<dbReference type="Gene3D" id="3.40.50.790">
    <property type="match status" value="1"/>
</dbReference>
<dbReference type="HAMAP" id="MF_01318_B">
    <property type="entry name" value="Ribosomal_uL1_B"/>
    <property type="match status" value="1"/>
</dbReference>
<dbReference type="InterPro" id="IPR005878">
    <property type="entry name" value="Ribosom_uL1_bac-type"/>
</dbReference>
<dbReference type="InterPro" id="IPR002143">
    <property type="entry name" value="Ribosomal_uL1"/>
</dbReference>
<dbReference type="InterPro" id="IPR023674">
    <property type="entry name" value="Ribosomal_uL1-like"/>
</dbReference>
<dbReference type="InterPro" id="IPR028364">
    <property type="entry name" value="Ribosomal_uL1/biogenesis"/>
</dbReference>
<dbReference type="InterPro" id="IPR016095">
    <property type="entry name" value="Ribosomal_uL1_3-a/b-sand"/>
</dbReference>
<dbReference type="InterPro" id="IPR023673">
    <property type="entry name" value="Ribosomal_uL1_CS"/>
</dbReference>
<dbReference type="NCBIfam" id="TIGR01169">
    <property type="entry name" value="rplA_bact"/>
    <property type="match status" value="1"/>
</dbReference>
<dbReference type="PANTHER" id="PTHR36427">
    <property type="entry name" value="54S RIBOSOMAL PROTEIN L1, MITOCHONDRIAL"/>
    <property type="match status" value="1"/>
</dbReference>
<dbReference type="PANTHER" id="PTHR36427:SF3">
    <property type="entry name" value="LARGE RIBOSOMAL SUBUNIT PROTEIN UL1M"/>
    <property type="match status" value="1"/>
</dbReference>
<dbReference type="Pfam" id="PF00687">
    <property type="entry name" value="Ribosomal_L1"/>
    <property type="match status" value="1"/>
</dbReference>
<dbReference type="PIRSF" id="PIRSF002155">
    <property type="entry name" value="Ribosomal_L1"/>
    <property type="match status" value="1"/>
</dbReference>
<dbReference type="SUPFAM" id="SSF56808">
    <property type="entry name" value="Ribosomal protein L1"/>
    <property type="match status" value="1"/>
</dbReference>
<dbReference type="PROSITE" id="PS01199">
    <property type="entry name" value="RIBOSOMAL_L1"/>
    <property type="match status" value="1"/>
</dbReference>
<sequence length="235" mass="24899">MSKRSKAYRAAAEKVDRDNLYTPLQAAKLAKETSSTKQDATVEVAIRLGVDPRKADQMVRGTVNLPHGTGKTARVAVFAVGEKAEQAQAAGADIVGSDDLIEKIQGGFLDFDAAIATPDQMAKVGRIARVLGPRGLMPNPKTGTVTPDVAKAVADIKGGKINFRVDKQANLHFVIGKASFDEKALAENYGAALDEVLRLKPSASKGRYLKKITVSTTTGPGIPVDPSITRNFAEA</sequence>
<name>RL1_MYCPA</name>
<reference key="1">
    <citation type="journal article" date="2005" name="Proc. Natl. Acad. Sci. U.S.A.">
        <title>The complete genome sequence of Mycobacterium avium subspecies paratuberculosis.</title>
        <authorList>
            <person name="Li L."/>
            <person name="Bannantine J.P."/>
            <person name="Zhang Q."/>
            <person name="Amonsin A."/>
            <person name="May B.J."/>
            <person name="Alt D."/>
            <person name="Banerji N."/>
            <person name="Kanjilal S."/>
            <person name="Kapur V."/>
        </authorList>
    </citation>
    <scope>NUCLEOTIDE SEQUENCE [LARGE SCALE GENOMIC DNA]</scope>
    <source>
        <strain>ATCC BAA-968 / K-10</strain>
    </source>
</reference>
<gene>
    <name evidence="1" type="primary">rplA</name>
    <name type="ordered locus">MAP_4113</name>
</gene>
<comment type="function">
    <text evidence="1">Binds directly to 23S rRNA. The L1 stalk is quite mobile in the ribosome, and is involved in E site tRNA release.</text>
</comment>
<comment type="function">
    <text evidence="1">Protein L1 is also a translational repressor protein, it controls the translation of the L11 operon by binding to its mRNA.</text>
</comment>
<comment type="subunit">
    <text evidence="1">Part of the 50S ribosomal subunit.</text>
</comment>
<comment type="similarity">
    <text evidence="1">Belongs to the universal ribosomal protein uL1 family.</text>
</comment>
<feature type="chain" id="PRO_0000125691" description="Large ribosomal subunit protein uL1">
    <location>
        <begin position="1"/>
        <end position="235"/>
    </location>
</feature>
<keyword id="KW-1185">Reference proteome</keyword>
<keyword id="KW-0678">Repressor</keyword>
<keyword id="KW-0687">Ribonucleoprotein</keyword>
<keyword id="KW-0689">Ribosomal protein</keyword>
<keyword id="KW-0694">RNA-binding</keyword>
<keyword id="KW-0699">rRNA-binding</keyword>
<keyword id="KW-0810">Translation regulation</keyword>
<keyword id="KW-0820">tRNA-binding</keyword>